<keyword id="KW-1185">Reference proteome</keyword>
<gene>
    <name type="primary">ninG</name>
</gene>
<organismHost>
    <name type="scientific">Escherichia coli O157:H7</name>
    <dbReference type="NCBI Taxonomy" id="83334"/>
</organismHost>
<dbReference type="EMBL" id="AP000363">
    <property type="protein sequence ID" value="BAA84320.1"/>
    <property type="molecule type" value="Genomic_DNA"/>
</dbReference>
<dbReference type="RefSeq" id="NP_050536.1">
    <property type="nucleotide sequence ID" value="NC_000902.1"/>
</dbReference>
<dbReference type="SMR" id="P69175"/>
<dbReference type="KEGG" id="vg:1262270"/>
<dbReference type="OrthoDB" id="10888at10239"/>
<dbReference type="Proteomes" id="UP000002665">
    <property type="component" value="Genome"/>
</dbReference>
<dbReference type="InterPro" id="IPR008713">
    <property type="entry name" value="Phage_lambda_NinG"/>
</dbReference>
<dbReference type="Pfam" id="PF05766">
    <property type="entry name" value="NinG"/>
    <property type="match status" value="1"/>
</dbReference>
<protein>
    <recommendedName>
        <fullName>Protein ninG</fullName>
    </recommendedName>
</protein>
<accession>P69175</accession>
<accession>Q9ZWX1</accession>
<comment type="similarity">
    <text evidence="2">Belongs to the ninG family.</text>
</comment>
<feature type="chain" id="PRO_0000077630" description="Protein ninG">
    <location>
        <begin position="1"/>
        <end position="201"/>
    </location>
</feature>
<feature type="region of interest" description="Disordered" evidence="1">
    <location>
        <begin position="36"/>
        <end position="64"/>
    </location>
</feature>
<evidence type="ECO:0000256" key="1">
    <source>
        <dbReference type="SAM" id="MobiDB-lite"/>
    </source>
</evidence>
<evidence type="ECO:0000305" key="2"/>
<sequence length="201" mass="23790">MAKPARRKCKICKEWFHPAFSNQWWCCPEHGTQLALERRSKEREKAEKAAEKKRRREEQKQKDKLKIRKLALKPRSYWIKQAQQAVNAFIRERDRDLPCISCGTLTSAQWDAGHYRTTAAAPQLRFDERNIHKQCVVCNQHKSGNLVPYRVELINRIGQEAVDEIESNHNRHRWTVEECRAIKAKYQQKLKDLRNSRSEAA</sequence>
<reference key="1">
    <citation type="journal article" date="1999" name="DNA Res.">
        <title>Sequence analysis of Stx2-converting phage VT2-Sa shows a great divergence in early regulation and replication regions.</title>
        <authorList>
            <person name="Miyamoto H."/>
            <person name="Nakai W."/>
            <person name="Yajima N."/>
            <person name="Fujibayashi A."/>
            <person name="Higuchi T."/>
            <person name="Sato K."/>
            <person name="Matsushiro A."/>
        </authorList>
    </citation>
    <scope>NUCLEOTIDE SEQUENCE [LARGE SCALE GENOMIC DNA]</scope>
</reference>
<organism>
    <name type="scientific">Enterobacteria phage VT2-Sa</name>
    <name type="common">Bacteriophage VT2-Sa</name>
    <dbReference type="NCBI Taxonomy" id="97081"/>
    <lineage>
        <taxon>Viruses</taxon>
        <taxon>Duplodnaviria</taxon>
        <taxon>Heunggongvirae</taxon>
        <taxon>Uroviricota</taxon>
        <taxon>Caudoviricetes</taxon>
        <taxon>Sepvirinae</taxon>
        <taxon>Traversvirus</taxon>
        <taxon>Traversvirus II</taxon>
    </lineage>
</organism>
<proteinExistence type="inferred from homology"/>
<name>NING_BPVT2</name>